<gene>
    <name evidence="1" type="primary">ycgR</name>
    <name type="ordered locus">azo2711</name>
</gene>
<protein>
    <recommendedName>
        <fullName evidence="1">Flagellar brake protein YcgR</fullName>
    </recommendedName>
    <alternativeName>
        <fullName evidence="1">Cyclic di-GMP binding protein YcgR</fullName>
    </alternativeName>
</protein>
<sequence>MSNQNDDTRVDLLGSDDFEKYLLYGSREIRQILQGLIDHHALITAQTVPGHQSFLTTVVALPDDGASIIIDAGPDEHINQRVGNAERLVCMSQLDKIRIQFDLSAPALTRYENRPAFRAPVPAQLLRLQRREFYRLQTPVTHTVTCRIPLPQPDGRTLELETRVIDISGGGIAVVVPPDNVPFGADMEFENCKLTLPELGTIPVRLKVRNLFRLTNRNGVEMLRAGCEFVDLPRSADNAIQRYIFKVERDRSARERGRL</sequence>
<proteinExistence type="inferred from homology"/>
<feature type="chain" id="PRO_0000395266" description="Flagellar brake protein YcgR">
    <location>
        <begin position="1"/>
        <end position="259"/>
    </location>
</feature>
<feature type="domain" description="PilZ" evidence="1">
    <location>
        <begin position="129"/>
        <end position="246"/>
    </location>
</feature>
<accession>A1K922</accession>
<comment type="function">
    <text evidence="1">Acts as a flagellar brake, regulating swimming and swarming in a bis-(3'-5') cyclic diguanylic acid (c-di-GMP)-dependent manner. Binds 1 c-di-GMP dimer per subunit. Increasing levels of c-di-GMP lead to decreased motility.</text>
</comment>
<comment type="subunit">
    <text evidence="1">Monomer. Interacts with the flagellar basal bodies.</text>
</comment>
<comment type="subcellular location">
    <subcellularLocation>
        <location evidence="1">Bacterial flagellum basal body</location>
    </subcellularLocation>
</comment>
<comment type="similarity">
    <text evidence="1">Belongs to the YcgR family.</text>
</comment>
<name>YCGR_AZOSB</name>
<keyword id="KW-0975">Bacterial flagellum</keyword>
<keyword id="KW-0973">c-di-GMP</keyword>
<keyword id="KW-0547">Nucleotide-binding</keyword>
<keyword id="KW-1185">Reference proteome</keyword>
<dbReference type="EMBL" id="AM406670">
    <property type="protein sequence ID" value="CAL95327.1"/>
    <property type="molecule type" value="Genomic_DNA"/>
</dbReference>
<dbReference type="RefSeq" id="WP_011766437.1">
    <property type="nucleotide sequence ID" value="NC_008702.1"/>
</dbReference>
<dbReference type="SMR" id="A1K922"/>
<dbReference type="STRING" id="62928.azo2711"/>
<dbReference type="KEGG" id="aoa:dqs_2846"/>
<dbReference type="KEGG" id="azo:azo2711"/>
<dbReference type="eggNOG" id="COG5581">
    <property type="taxonomic scope" value="Bacteria"/>
</dbReference>
<dbReference type="HOGENOM" id="CLU_086025_0_0_4"/>
<dbReference type="OrthoDB" id="5572581at2"/>
<dbReference type="Proteomes" id="UP000002588">
    <property type="component" value="Chromosome"/>
</dbReference>
<dbReference type="GO" id="GO:0009425">
    <property type="term" value="C:bacterial-type flagellum basal body"/>
    <property type="evidence" value="ECO:0007669"/>
    <property type="project" value="UniProtKB-SubCell"/>
</dbReference>
<dbReference type="GO" id="GO:0035438">
    <property type="term" value="F:cyclic-di-GMP binding"/>
    <property type="evidence" value="ECO:0007669"/>
    <property type="project" value="UniProtKB-UniRule"/>
</dbReference>
<dbReference type="GO" id="GO:0071973">
    <property type="term" value="P:bacterial-type flagellum-dependent cell motility"/>
    <property type="evidence" value="ECO:0007669"/>
    <property type="project" value="UniProtKB-UniRule"/>
</dbReference>
<dbReference type="GO" id="GO:0071945">
    <property type="term" value="P:regulation of bacterial-type flagellum-dependent cell motility by regulation of motor speed"/>
    <property type="evidence" value="ECO:0007669"/>
    <property type="project" value="UniProtKB-UniRule"/>
</dbReference>
<dbReference type="Gene3D" id="2.30.110.10">
    <property type="entry name" value="Electron Transport, Fmn-binding Protein, Chain A"/>
    <property type="match status" value="1"/>
</dbReference>
<dbReference type="Gene3D" id="2.40.10.220">
    <property type="entry name" value="predicted glycosyltransferase like domains"/>
    <property type="match status" value="1"/>
</dbReference>
<dbReference type="HAMAP" id="MF_01457">
    <property type="entry name" value="YcgR"/>
    <property type="match status" value="1"/>
</dbReference>
<dbReference type="InterPro" id="IPR009875">
    <property type="entry name" value="PilZ_domain"/>
</dbReference>
<dbReference type="InterPro" id="IPR012349">
    <property type="entry name" value="Split_barrel_FMN-bd"/>
</dbReference>
<dbReference type="InterPro" id="IPR023787">
    <property type="entry name" value="T3SS_YcgR"/>
</dbReference>
<dbReference type="InterPro" id="IPR009926">
    <property type="entry name" value="T3SS_YcgR_PilZN"/>
</dbReference>
<dbReference type="Pfam" id="PF07238">
    <property type="entry name" value="PilZ"/>
    <property type="match status" value="1"/>
</dbReference>
<dbReference type="Pfam" id="PF07317">
    <property type="entry name" value="PilZN"/>
    <property type="match status" value="1"/>
</dbReference>
<reference key="1">
    <citation type="journal article" date="2006" name="Nat. Biotechnol.">
        <title>Complete genome of the mutualistic, N2-fixing grass endophyte Azoarcus sp. strain BH72.</title>
        <authorList>
            <person name="Krause A."/>
            <person name="Ramakumar A."/>
            <person name="Bartels D."/>
            <person name="Battistoni F."/>
            <person name="Bekel T."/>
            <person name="Boch J."/>
            <person name="Boehm M."/>
            <person name="Friedrich F."/>
            <person name="Hurek T."/>
            <person name="Krause L."/>
            <person name="Linke B."/>
            <person name="McHardy A.C."/>
            <person name="Sarkar A."/>
            <person name="Schneiker S."/>
            <person name="Syed A.A."/>
            <person name="Thauer R."/>
            <person name="Vorhoelter F.-J."/>
            <person name="Weidner S."/>
            <person name="Puehler A."/>
            <person name="Reinhold-Hurek B."/>
            <person name="Kaiser O."/>
            <person name="Goesmann A."/>
        </authorList>
    </citation>
    <scope>NUCLEOTIDE SEQUENCE [LARGE SCALE GENOMIC DNA]</scope>
    <source>
        <strain>BH72</strain>
    </source>
</reference>
<organism>
    <name type="scientific">Azoarcus sp. (strain BH72)</name>
    <dbReference type="NCBI Taxonomy" id="418699"/>
    <lineage>
        <taxon>Bacteria</taxon>
        <taxon>Pseudomonadati</taxon>
        <taxon>Pseudomonadota</taxon>
        <taxon>Betaproteobacteria</taxon>
        <taxon>Rhodocyclales</taxon>
        <taxon>Zoogloeaceae</taxon>
        <taxon>Azoarcus</taxon>
    </lineage>
</organism>
<evidence type="ECO:0000255" key="1">
    <source>
        <dbReference type="HAMAP-Rule" id="MF_01457"/>
    </source>
</evidence>